<protein>
    <recommendedName>
        <fullName evidence="1">Phosphoenolpyruvate carboxykinase [GTP]</fullName>
        <shortName evidence="1">PEP carboxykinase</shortName>
        <shortName evidence="1">PEPCK</shortName>
        <ecNumber evidence="1">4.1.1.32</ecNumber>
    </recommendedName>
</protein>
<reference key="1">
    <citation type="submission" date="2008-08" db="EMBL/GenBank/DDBJ databases">
        <title>Complete sequence of Anaeromyxobacter sp. K.</title>
        <authorList>
            <consortium name="US DOE Joint Genome Institute"/>
            <person name="Lucas S."/>
            <person name="Copeland A."/>
            <person name="Lapidus A."/>
            <person name="Glavina del Rio T."/>
            <person name="Dalin E."/>
            <person name="Tice H."/>
            <person name="Bruce D."/>
            <person name="Goodwin L."/>
            <person name="Pitluck S."/>
            <person name="Saunders E."/>
            <person name="Brettin T."/>
            <person name="Detter J.C."/>
            <person name="Han C."/>
            <person name="Larimer F."/>
            <person name="Land M."/>
            <person name="Hauser L."/>
            <person name="Kyrpides N."/>
            <person name="Ovchinnikiva G."/>
            <person name="Beliaev A."/>
        </authorList>
    </citation>
    <scope>NUCLEOTIDE SEQUENCE [LARGE SCALE GENOMIC DNA]</scope>
    <source>
        <strain>K</strain>
    </source>
</reference>
<name>PCKG_ANASK</name>
<evidence type="ECO:0000255" key="1">
    <source>
        <dbReference type="HAMAP-Rule" id="MF_00452"/>
    </source>
</evidence>
<evidence type="ECO:0000256" key="2">
    <source>
        <dbReference type="SAM" id="MobiDB-lite"/>
    </source>
</evidence>
<accession>B4UDY7</accession>
<sequence length="596" mass="65881">MSTSPAARPTSNAHLLGWVDEMAKLCKPDRVYWCDGSEAEKKRLTDDAVAAKVLIPLDQQKWPGCHYHHSNSSDVARVEHLTFICTPTKEQAGPTNNWMEPKEAYRKLGAIFDGSMKGRTMYVVPYVMGPSTSPFAKVGIEITDSVYVALNMGIMARMGKVALDRLGDSDEFNRGLHSVADCNPERRFICHFPQDNTIWSVGSGYGGNALLGKKCLALRIASYLAKNEGWLAEHMLILEAESPTGEKQYVAAAFPSACGKTNFAMMIPPAAFPGWKIRTVGDDISWMRVGEDGRLWAVNPENGYFGVAPGTNRKTNPNAMDSVRKDTIFTNVARTPDGDIWWEGMDHEAPAELIDWKGQPWKKGSTEKAAHPNSRFTAPAKNNPAISPLVDDPKGVPISAIIFGGRRSTTVPLVLEAFNWTHGVYLGSTMGSETTAAATGQVGVVRRDPMAMLPFIGYDCGSYLQHWLDMQSRIPNPPKIFLVNWFRKSAEGKFLWPGYGDNMRVLKWMLDRAAGRAPAQETLLGYTPGDAGLDLHGLDVSKDAIAAATRIDLGEWEQELESQSEWFEKLGKTLPRPLALQRELLLERVRAARKVK</sequence>
<gene>
    <name evidence="1" type="primary">pckG</name>
    <name type="ordered locus">AnaeK_3734</name>
</gene>
<comment type="function">
    <text evidence="1">Catalyzes the conversion of oxaloacetate (OAA) to phosphoenolpyruvate (PEP), the rate-limiting step in the metabolic pathway that produces glucose from lactate and other precursors derived from the citric acid cycle.</text>
</comment>
<comment type="catalytic activity">
    <reaction evidence="1">
        <text>oxaloacetate + GTP = phosphoenolpyruvate + GDP + CO2</text>
        <dbReference type="Rhea" id="RHEA:10388"/>
        <dbReference type="ChEBI" id="CHEBI:16452"/>
        <dbReference type="ChEBI" id="CHEBI:16526"/>
        <dbReference type="ChEBI" id="CHEBI:37565"/>
        <dbReference type="ChEBI" id="CHEBI:58189"/>
        <dbReference type="ChEBI" id="CHEBI:58702"/>
        <dbReference type="EC" id="4.1.1.32"/>
    </reaction>
</comment>
<comment type="cofactor">
    <cofactor evidence="1">
        <name>Mn(2+)</name>
        <dbReference type="ChEBI" id="CHEBI:29035"/>
    </cofactor>
    <text evidence="1">Binds 1 Mn(2+) ion per subunit.</text>
</comment>
<comment type="pathway">
    <text evidence="1">Carbohydrate biosynthesis; gluconeogenesis.</text>
</comment>
<comment type="subunit">
    <text evidence="1">Monomer.</text>
</comment>
<comment type="subcellular location">
    <subcellularLocation>
        <location evidence="1">Cytoplasm</location>
    </subcellularLocation>
</comment>
<comment type="similarity">
    <text evidence="1">Belongs to the phosphoenolpyruvate carboxykinase [GTP] family.</text>
</comment>
<dbReference type="EC" id="4.1.1.32" evidence="1"/>
<dbReference type="EMBL" id="CP001131">
    <property type="protein sequence ID" value="ACG74945.1"/>
    <property type="molecule type" value="Genomic_DNA"/>
</dbReference>
<dbReference type="RefSeq" id="WP_012527709.1">
    <property type="nucleotide sequence ID" value="NC_011145.1"/>
</dbReference>
<dbReference type="SMR" id="B4UDY7"/>
<dbReference type="KEGG" id="ank:AnaeK_3734"/>
<dbReference type="HOGENOM" id="CLU_028872_1_1_7"/>
<dbReference type="OrthoDB" id="9758871at2"/>
<dbReference type="UniPathway" id="UPA00138"/>
<dbReference type="Proteomes" id="UP000001871">
    <property type="component" value="Chromosome"/>
</dbReference>
<dbReference type="GO" id="GO:0005829">
    <property type="term" value="C:cytosol"/>
    <property type="evidence" value="ECO:0007669"/>
    <property type="project" value="TreeGrafter"/>
</dbReference>
<dbReference type="GO" id="GO:0005525">
    <property type="term" value="F:GTP binding"/>
    <property type="evidence" value="ECO:0007669"/>
    <property type="project" value="UniProtKB-UniRule"/>
</dbReference>
<dbReference type="GO" id="GO:0030145">
    <property type="term" value="F:manganese ion binding"/>
    <property type="evidence" value="ECO:0007669"/>
    <property type="project" value="UniProtKB-UniRule"/>
</dbReference>
<dbReference type="GO" id="GO:0004613">
    <property type="term" value="F:phosphoenolpyruvate carboxykinase (GTP) activity"/>
    <property type="evidence" value="ECO:0007669"/>
    <property type="project" value="UniProtKB-UniRule"/>
</dbReference>
<dbReference type="GO" id="GO:0071333">
    <property type="term" value="P:cellular response to glucose stimulus"/>
    <property type="evidence" value="ECO:0007669"/>
    <property type="project" value="TreeGrafter"/>
</dbReference>
<dbReference type="GO" id="GO:0006094">
    <property type="term" value="P:gluconeogenesis"/>
    <property type="evidence" value="ECO:0007669"/>
    <property type="project" value="UniProtKB-UniRule"/>
</dbReference>
<dbReference type="GO" id="GO:0046327">
    <property type="term" value="P:glycerol biosynthetic process from pyruvate"/>
    <property type="evidence" value="ECO:0007669"/>
    <property type="project" value="TreeGrafter"/>
</dbReference>
<dbReference type="GO" id="GO:0006107">
    <property type="term" value="P:oxaloacetate metabolic process"/>
    <property type="evidence" value="ECO:0007669"/>
    <property type="project" value="TreeGrafter"/>
</dbReference>
<dbReference type="GO" id="GO:0019543">
    <property type="term" value="P:propionate catabolic process"/>
    <property type="evidence" value="ECO:0007669"/>
    <property type="project" value="TreeGrafter"/>
</dbReference>
<dbReference type="GO" id="GO:0033993">
    <property type="term" value="P:response to lipid"/>
    <property type="evidence" value="ECO:0007669"/>
    <property type="project" value="TreeGrafter"/>
</dbReference>
<dbReference type="GO" id="GO:0042594">
    <property type="term" value="P:response to starvation"/>
    <property type="evidence" value="ECO:0007669"/>
    <property type="project" value="TreeGrafter"/>
</dbReference>
<dbReference type="CDD" id="cd00819">
    <property type="entry name" value="PEPCK_GTP"/>
    <property type="match status" value="1"/>
</dbReference>
<dbReference type="FunFam" id="3.40.449.10:FF:000005">
    <property type="entry name" value="Phosphoenolpyruvate carboxykinase [GTP]"/>
    <property type="match status" value="1"/>
</dbReference>
<dbReference type="Gene3D" id="3.90.228.20">
    <property type="match status" value="1"/>
</dbReference>
<dbReference type="Gene3D" id="3.40.449.10">
    <property type="entry name" value="Phosphoenolpyruvate Carboxykinase, domain 1"/>
    <property type="match status" value="1"/>
</dbReference>
<dbReference type="Gene3D" id="2.170.8.10">
    <property type="entry name" value="Phosphoenolpyruvate Carboxykinase, domain 2"/>
    <property type="match status" value="1"/>
</dbReference>
<dbReference type="HAMAP" id="MF_00452">
    <property type="entry name" value="PEPCK_GTP"/>
    <property type="match status" value="1"/>
</dbReference>
<dbReference type="InterPro" id="IPR018091">
    <property type="entry name" value="PEP_carboxykin_GTP_CS"/>
</dbReference>
<dbReference type="InterPro" id="IPR013035">
    <property type="entry name" value="PEP_carboxykinase_C"/>
</dbReference>
<dbReference type="InterPro" id="IPR008209">
    <property type="entry name" value="PEP_carboxykinase_GTP"/>
</dbReference>
<dbReference type="InterPro" id="IPR035077">
    <property type="entry name" value="PEP_carboxykinase_GTP_C"/>
</dbReference>
<dbReference type="InterPro" id="IPR035078">
    <property type="entry name" value="PEP_carboxykinase_GTP_N"/>
</dbReference>
<dbReference type="InterPro" id="IPR008210">
    <property type="entry name" value="PEP_carboxykinase_N"/>
</dbReference>
<dbReference type="NCBIfam" id="NF003253">
    <property type="entry name" value="PRK04210.1"/>
    <property type="match status" value="1"/>
</dbReference>
<dbReference type="PANTHER" id="PTHR11561">
    <property type="entry name" value="PHOSPHOENOLPYRUVATE CARBOXYKINASE"/>
    <property type="match status" value="1"/>
</dbReference>
<dbReference type="PANTHER" id="PTHR11561:SF0">
    <property type="entry name" value="PHOSPHOENOLPYRUVATE CARBOXYKINASE [GTP]-RELATED"/>
    <property type="match status" value="1"/>
</dbReference>
<dbReference type="Pfam" id="PF00821">
    <property type="entry name" value="PEPCK_GTP"/>
    <property type="match status" value="1"/>
</dbReference>
<dbReference type="Pfam" id="PF17297">
    <property type="entry name" value="PEPCK_N"/>
    <property type="match status" value="1"/>
</dbReference>
<dbReference type="PIRSF" id="PIRSF001348">
    <property type="entry name" value="PEP_carboxykinase_GTP"/>
    <property type="match status" value="1"/>
</dbReference>
<dbReference type="SUPFAM" id="SSF68923">
    <property type="entry name" value="PEP carboxykinase N-terminal domain"/>
    <property type="match status" value="1"/>
</dbReference>
<dbReference type="SUPFAM" id="SSF53795">
    <property type="entry name" value="PEP carboxykinase-like"/>
    <property type="match status" value="1"/>
</dbReference>
<dbReference type="PROSITE" id="PS00505">
    <property type="entry name" value="PEPCK_GTP"/>
    <property type="match status" value="1"/>
</dbReference>
<feature type="chain" id="PRO_1000125043" description="Phosphoenolpyruvate carboxykinase [GTP]">
    <location>
        <begin position="1"/>
        <end position="596"/>
    </location>
</feature>
<feature type="region of interest" description="Disordered" evidence="2">
    <location>
        <begin position="362"/>
        <end position="388"/>
    </location>
</feature>
<feature type="active site" evidence="1">
    <location>
        <position position="258"/>
    </location>
</feature>
<feature type="binding site" evidence="1">
    <location>
        <position position="77"/>
    </location>
    <ligand>
        <name>substrate</name>
    </ligand>
</feature>
<feature type="binding site" evidence="1">
    <location>
        <begin position="205"/>
        <end position="207"/>
    </location>
    <ligand>
        <name>substrate</name>
    </ligand>
</feature>
<feature type="binding site" evidence="1">
    <location>
        <position position="214"/>
    </location>
    <ligand>
        <name>Mn(2+)</name>
        <dbReference type="ChEBI" id="CHEBI:29035"/>
    </ligand>
</feature>
<feature type="binding site" evidence="1">
    <location>
        <position position="234"/>
    </location>
    <ligand>
        <name>Mn(2+)</name>
        <dbReference type="ChEBI" id="CHEBI:29035"/>
    </ligand>
</feature>
<feature type="binding site" evidence="1">
    <location>
        <position position="256"/>
    </location>
    <ligand>
        <name>substrate</name>
    </ligand>
</feature>
<feature type="binding site" evidence="1">
    <location>
        <begin position="257"/>
        <end position="262"/>
    </location>
    <ligand>
        <name>GTP</name>
        <dbReference type="ChEBI" id="CHEBI:37565"/>
    </ligand>
</feature>
<feature type="binding site" evidence="1">
    <location>
        <position position="283"/>
    </location>
    <ligand>
        <name>Mn(2+)</name>
        <dbReference type="ChEBI" id="CHEBI:29035"/>
    </ligand>
</feature>
<feature type="binding site" evidence="1">
    <location>
        <begin position="373"/>
        <end position="375"/>
    </location>
    <ligand>
        <name>substrate</name>
    </ligand>
</feature>
<feature type="binding site" evidence="1">
    <location>
        <position position="375"/>
    </location>
    <ligand>
        <name>GTP</name>
        <dbReference type="ChEBI" id="CHEBI:37565"/>
    </ligand>
</feature>
<feature type="binding site" evidence="1">
    <location>
        <position position="406"/>
    </location>
    <ligand>
        <name>GTP</name>
        <dbReference type="ChEBI" id="CHEBI:37565"/>
    </ligand>
</feature>
<feature type="binding site" evidence="1">
    <location>
        <begin position="499"/>
        <end position="502"/>
    </location>
    <ligand>
        <name>GTP</name>
        <dbReference type="ChEBI" id="CHEBI:37565"/>
    </ligand>
</feature>
<keyword id="KW-0963">Cytoplasm</keyword>
<keyword id="KW-0210">Decarboxylase</keyword>
<keyword id="KW-0312">Gluconeogenesis</keyword>
<keyword id="KW-0342">GTP-binding</keyword>
<keyword id="KW-0456">Lyase</keyword>
<keyword id="KW-0464">Manganese</keyword>
<keyword id="KW-0479">Metal-binding</keyword>
<keyword id="KW-0547">Nucleotide-binding</keyword>
<organism>
    <name type="scientific">Anaeromyxobacter sp. (strain K)</name>
    <dbReference type="NCBI Taxonomy" id="447217"/>
    <lineage>
        <taxon>Bacteria</taxon>
        <taxon>Pseudomonadati</taxon>
        <taxon>Myxococcota</taxon>
        <taxon>Myxococcia</taxon>
        <taxon>Myxococcales</taxon>
        <taxon>Cystobacterineae</taxon>
        <taxon>Anaeromyxobacteraceae</taxon>
        <taxon>Anaeromyxobacter</taxon>
    </lineage>
</organism>
<proteinExistence type="inferred from homology"/>